<feature type="chain" id="PRO_0000100296" description="Cold shock protein CspC">
    <location>
        <begin position="1"/>
        <end position="66"/>
    </location>
</feature>
<feature type="domain" description="CSD">
    <location>
        <begin position="4"/>
        <end position="63"/>
    </location>
</feature>
<reference key="1">
    <citation type="journal article" date="1997" name="Mol. Microbiol.">
        <title>A family of cold shock proteins in Bacillus subtilis is essential for cellular growth and for efficient protein synthesis at optimal and low temperatures.</title>
        <authorList>
            <person name="Graumann P."/>
            <person name="Wendrich T.M."/>
            <person name="Weber M.H.W."/>
            <person name="Schroeder K."/>
            <person name="Marahiel M.A."/>
        </authorList>
    </citation>
    <scope>NUCLEOTIDE SEQUENCE [GENOMIC DNA]</scope>
</reference>
<reference key="2">
    <citation type="submission" date="1993-11" db="EMBL/GenBank/DDBJ databases">
        <authorList>
            <person name="Watanabe T."/>
            <person name="Muto A."/>
        </authorList>
    </citation>
    <scope>NUCLEOTIDE SEQUENCE [GENOMIC DNA]</scope>
    <source>
        <strain>168</strain>
    </source>
</reference>
<reference key="3">
    <citation type="submission" date="1997-03" db="EMBL/GenBank/DDBJ databases">
        <title>A 148 kbp sequence of the region between 35 and 47 degree of the Bacillus subtilis genome.</title>
        <authorList>
            <person name="Kasahara Y."/>
            <person name="Nakai S."/>
            <person name="Lee S."/>
            <person name="Sadaie Y."/>
            <person name="Ogasawara N."/>
        </authorList>
    </citation>
    <scope>NUCLEOTIDE SEQUENCE [GENOMIC DNA]</scope>
    <source>
        <strain>168</strain>
    </source>
</reference>
<reference key="4">
    <citation type="journal article" date="1997" name="Nature">
        <title>The complete genome sequence of the Gram-positive bacterium Bacillus subtilis.</title>
        <authorList>
            <person name="Kunst F."/>
            <person name="Ogasawara N."/>
            <person name="Moszer I."/>
            <person name="Albertini A.M."/>
            <person name="Alloni G."/>
            <person name="Azevedo V."/>
            <person name="Bertero M.G."/>
            <person name="Bessieres P."/>
            <person name="Bolotin A."/>
            <person name="Borchert S."/>
            <person name="Borriss R."/>
            <person name="Boursier L."/>
            <person name="Brans A."/>
            <person name="Braun M."/>
            <person name="Brignell S.C."/>
            <person name="Bron S."/>
            <person name="Brouillet S."/>
            <person name="Bruschi C.V."/>
            <person name="Caldwell B."/>
            <person name="Capuano V."/>
            <person name="Carter N.M."/>
            <person name="Choi S.-K."/>
            <person name="Codani J.-J."/>
            <person name="Connerton I.F."/>
            <person name="Cummings N.J."/>
            <person name="Daniel R.A."/>
            <person name="Denizot F."/>
            <person name="Devine K.M."/>
            <person name="Duesterhoeft A."/>
            <person name="Ehrlich S.D."/>
            <person name="Emmerson P.T."/>
            <person name="Entian K.-D."/>
            <person name="Errington J."/>
            <person name="Fabret C."/>
            <person name="Ferrari E."/>
            <person name="Foulger D."/>
            <person name="Fritz C."/>
            <person name="Fujita M."/>
            <person name="Fujita Y."/>
            <person name="Fuma S."/>
            <person name="Galizzi A."/>
            <person name="Galleron N."/>
            <person name="Ghim S.-Y."/>
            <person name="Glaser P."/>
            <person name="Goffeau A."/>
            <person name="Golightly E.J."/>
            <person name="Grandi G."/>
            <person name="Guiseppi G."/>
            <person name="Guy B.J."/>
            <person name="Haga K."/>
            <person name="Haiech J."/>
            <person name="Harwood C.R."/>
            <person name="Henaut A."/>
            <person name="Hilbert H."/>
            <person name="Holsappel S."/>
            <person name="Hosono S."/>
            <person name="Hullo M.-F."/>
            <person name="Itaya M."/>
            <person name="Jones L.-M."/>
            <person name="Joris B."/>
            <person name="Karamata D."/>
            <person name="Kasahara Y."/>
            <person name="Klaerr-Blanchard M."/>
            <person name="Klein C."/>
            <person name="Kobayashi Y."/>
            <person name="Koetter P."/>
            <person name="Koningstein G."/>
            <person name="Krogh S."/>
            <person name="Kumano M."/>
            <person name="Kurita K."/>
            <person name="Lapidus A."/>
            <person name="Lardinois S."/>
            <person name="Lauber J."/>
            <person name="Lazarevic V."/>
            <person name="Lee S.-M."/>
            <person name="Levine A."/>
            <person name="Liu H."/>
            <person name="Masuda S."/>
            <person name="Mauel C."/>
            <person name="Medigue C."/>
            <person name="Medina N."/>
            <person name="Mellado R.P."/>
            <person name="Mizuno M."/>
            <person name="Moestl D."/>
            <person name="Nakai S."/>
            <person name="Noback M."/>
            <person name="Noone D."/>
            <person name="O'Reilly M."/>
            <person name="Ogawa K."/>
            <person name="Ogiwara A."/>
            <person name="Oudega B."/>
            <person name="Park S.-H."/>
            <person name="Parro V."/>
            <person name="Pohl T.M."/>
            <person name="Portetelle D."/>
            <person name="Porwollik S."/>
            <person name="Prescott A.M."/>
            <person name="Presecan E."/>
            <person name="Pujic P."/>
            <person name="Purnelle B."/>
            <person name="Rapoport G."/>
            <person name="Rey M."/>
            <person name="Reynolds S."/>
            <person name="Rieger M."/>
            <person name="Rivolta C."/>
            <person name="Rocha E."/>
            <person name="Roche B."/>
            <person name="Rose M."/>
            <person name="Sadaie Y."/>
            <person name="Sato T."/>
            <person name="Scanlan E."/>
            <person name="Schleich S."/>
            <person name="Schroeter R."/>
            <person name="Scoffone F."/>
            <person name="Sekiguchi J."/>
            <person name="Sekowska A."/>
            <person name="Seror S.J."/>
            <person name="Serror P."/>
            <person name="Shin B.-S."/>
            <person name="Soldo B."/>
            <person name="Sorokin A."/>
            <person name="Tacconi E."/>
            <person name="Takagi T."/>
            <person name="Takahashi H."/>
            <person name="Takemaru K."/>
            <person name="Takeuchi M."/>
            <person name="Tamakoshi A."/>
            <person name="Tanaka T."/>
            <person name="Terpstra P."/>
            <person name="Tognoni A."/>
            <person name="Tosato V."/>
            <person name="Uchiyama S."/>
            <person name="Vandenbol M."/>
            <person name="Vannier F."/>
            <person name="Vassarotti A."/>
            <person name="Viari A."/>
            <person name="Wambutt R."/>
            <person name="Wedler E."/>
            <person name="Wedler H."/>
            <person name="Weitzenegger T."/>
            <person name="Winters P."/>
            <person name="Wipat A."/>
            <person name="Yamamoto H."/>
            <person name="Yamane K."/>
            <person name="Yasumoto K."/>
            <person name="Yata K."/>
            <person name="Yoshida K."/>
            <person name="Yoshikawa H.-F."/>
            <person name="Zumstein E."/>
            <person name="Yoshikawa H."/>
            <person name="Danchin A."/>
        </authorList>
    </citation>
    <scope>NUCLEOTIDE SEQUENCE [LARGE SCALE GENOMIC DNA]</scope>
    <source>
        <strain>168</strain>
    </source>
</reference>
<reference key="5">
    <citation type="journal article" date="1996" name="J. Bacteriol.">
        <title>Cold shock stress-induced proteins in Bacillus subtilis.</title>
        <authorList>
            <person name="Graumann P."/>
            <person name="Schroeder K."/>
            <person name="Schmid R."/>
            <person name="Marahiel M.A."/>
        </authorList>
    </citation>
    <scope>PROTEIN SEQUENCE OF 1-28</scope>
    <source>
        <strain>168 / JH642</strain>
    </source>
</reference>
<sequence>MEQGTVKWFNAEKGFGFIERENGDDVFVHFSAIQSDGFKSLDEGQKVSFDVEQGARGAQAANVQKA</sequence>
<gene>
    <name type="primary">cspC</name>
    <name type="ordered locus">BSU05120</name>
</gene>
<name>CSPC_BACSU</name>
<evidence type="ECO:0000305" key="1"/>
<dbReference type="EMBL" id="U92976">
    <property type="protein sequence ID" value="AAC45646.1"/>
    <property type="molecule type" value="Genomic_DNA"/>
</dbReference>
<dbReference type="EMBL" id="D25230">
    <property type="protein sequence ID" value="BAA04956.1"/>
    <property type="molecule type" value="Genomic_DNA"/>
</dbReference>
<dbReference type="EMBL" id="AB001488">
    <property type="protein sequence ID" value="BAA19348.1"/>
    <property type="molecule type" value="Genomic_DNA"/>
</dbReference>
<dbReference type="EMBL" id="AL009126">
    <property type="protein sequence ID" value="CAB12319.1"/>
    <property type="molecule type" value="Genomic_DNA"/>
</dbReference>
<dbReference type="PIR" id="E69608">
    <property type="entry name" value="E69608"/>
</dbReference>
<dbReference type="RefSeq" id="NP_388393.1">
    <property type="nucleotide sequence ID" value="NC_000964.3"/>
</dbReference>
<dbReference type="RefSeq" id="WP_003234247.1">
    <property type="nucleotide sequence ID" value="NZ_OZ025638.1"/>
</dbReference>
<dbReference type="SMR" id="P39158"/>
<dbReference type="FunCoup" id="P39158">
    <property type="interactions" value="185"/>
</dbReference>
<dbReference type="STRING" id="224308.BSU05120"/>
<dbReference type="jPOST" id="P39158"/>
<dbReference type="PaxDb" id="224308-BSU05120"/>
<dbReference type="EnsemblBacteria" id="CAB12319">
    <property type="protein sequence ID" value="CAB12319"/>
    <property type="gene ID" value="BSU_05120"/>
</dbReference>
<dbReference type="GeneID" id="938114"/>
<dbReference type="KEGG" id="bsu:BSU05120"/>
<dbReference type="PATRIC" id="fig|224308.179.peg.546"/>
<dbReference type="eggNOG" id="COG1278">
    <property type="taxonomic scope" value="Bacteria"/>
</dbReference>
<dbReference type="InParanoid" id="P39158"/>
<dbReference type="OrthoDB" id="9805039at2"/>
<dbReference type="PhylomeDB" id="P39158"/>
<dbReference type="BioCyc" id="BSUB:BSU05120-MONOMER"/>
<dbReference type="Proteomes" id="UP000001570">
    <property type="component" value="Chromosome"/>
</dbReference>
<dbReference type="GO" id="GO:0005737">
    <property type="term" value="C:cytoplasm"/>
    <property type="evidence" value="ECO:0007669"/>
    <property type="project" value="UniProtKB-SubCell"/>
</dbReference>
<dbReference type="GO" id="GO:0003677">
    <property type="term" value="F:DNA binding"/>
    <property type="evidence" value="ECO:0007669"/>
    <property type="project" value="UniProtKB-KW"/>
</dbReference>
<dbReference type="GO" id="GO:0003676">
    <property type="term" value="F:nucleic acid binding"/>
    <property type="evidence" value="ECO:0000318"/>
    <property type="project" value="GO_Central"/>
</dbReference>
<dbReference type="GO" id="GO:0010468">
    <property type="term" value="P:regulation of gene expression"/>
    <property type="evidence" value="ECO:0000318"/>
    <property type="project" value="GO_Central"/>
</dbReference>
<dbReference type="CDD" id="cd04458">
    <property type="entry name" value="CSP_CDS"/>
    <property type="match status" value="1"/>
</dbReference>
<dbReference type="FunFam" id="2.40.50.140:FF:000006">
    <property type="entry name" value="Cold shock protein CspC"/>
    <property type="match status" value="1"/>
</dbReference>
<dbReference type="Gene3D" id="6.20.370.130">
    <property type="match status" value="1"/>
</dbReference>
<dbReference type="Gene3D" id="2.40.50.140">
    <property type="entry name" value="Nucleic acid-binding proteins"/>
    <property type="match status" value="1"/>
</dbReference>
<dbReference type="InterPro" id="IPR012156">
    <property type="entry name" value="Cold_shock_CspA"/>
</dbReference>
<dbReference type="InterPro" id="IPR050181">
    <property type="entry name" value="Cold_shock_domain"/>
</dbReference>
<dbReference type="InterPro" id="IPR011129">
    <property type="entry name" value="CSD"/>
</dbReference>
<dbReference type="InterPro" id="IPR019844">
    <property type="entry name" value="CSD_CS"/>
</dbReference>
<dbReference type="InterPro" id="IPR002059">
    <property type="entry name" value="CSP_DNA-bd"/>
</dbReference>
<dbReference type="InterPro" id="IPR012340">
    <property type="entry name" value="NA-bd_OB-fold"/>
</dbReference>
<dbReference type="PANTHER" id="PTHR11544">
    <property type="entry name" value="COLD SHOCK DOMAIN CONTAINING PROTEINS"/>
    <property type="match status" value="1"/>
</dbReference>
<dbReference type="Pfam" id="PF00313">
    <property type="entry name" value="CSD"/>
    <property type="match status" value="1"/>
</dbReference>
<dbReference type="PIRSF" id="PIRSF002599">
    <property type="entry name" value="Cold_shock_A"/>
    <property type="match status" value="1"/>
</dbReference>
<dbReference type="PRINTS" id="PR00050">
    <property type="entry name" value="COLDSHOCK"/>
</dbReference>
<dbReference type="SMART" id="SM00357">
    <property type="entry name" value="CSP"/>
    <property type="match status" value="1"/>
</dbReference>
<dbReference type="SUPFAM" id="SSF50249">
    <property type="entry name" value="Nucleic acid-binding proteins"/>
    <property type="match status" value="1"/>
</dbReference>
<dbReference type="PROSITE" id="PS00352">
    <property type="entry name" value="CSD_1"/>
    <property type="match status" value="1"/>
</dbReference>
<dbReference type="PROSITE" id="PS51857">
    <property type="entry name" value="CSD_2"/>
    <property type="match status" value="1"/>
</dbReference>
<comment type="subcellular location">
    <subcellularLocation>
        <location evidence="1">Cytoplasm</location>
    </subcellularLocation>
</comment>
<comment type="induction">
    <text>In response to low temperature.</text>
</comment>
<organism>
    <name type="scientific">Bacillus subtilis (strain 168)</name>
    <dbReference type="NCBI Taxonomy" id="224308"/>
    <lineage>
        <taxon>Bacteria</taxon>
        <taxon>Bacillati</taxon>
        <taxon>Bacillota</taxon>
        <taxon>Bacilli</taxon>
        <taxon>Bacillales</taxon>
        <taxon>Bacillaceae</taxon>
        <taxon>Bacillus</taxon>
    </lineage>
</organism>
<keyword id="KW-0010">Activator</keyword>
<keyword id="KW-0963">Cytoplasm</keyword>
<keyword id="KW-0903">Direct protein sequencing</keyword>
<keyword id="KW-0238">DNA-binding</keyword>
<keyword id="KW-1185">Reference proteome</keyword>
<keyword id="KW-0346">Stress response</keyword>
<keyword id="KW-0804">Transcription</keyword>
<keyword id="KW-0805">Transcription regulation</keyword>
<protein>
    <recommendedName>
        <fullName>Cold shock protein CspC</fullName>
    </recommendedName>
</protein>
<accession>P39158</accession>
<proteinExistence type="evidence at protein level"/>